<dbReference type="EC" id="3.5.2.7" evidence="1"/>
<dbReference type="EMBL" id="CP000720">
    <property type="protein sequence ID" value="ABS47503.1"/>
    <property type="molecule type" value="Genomic_DNA"/>
</dbReference>
<dbReference type="RefSeq" id="WP_011192374.1">
    <property type="nucleotide sequence ID" value="NC_009708.1"/>
</dbReference>
<dbReference type="SMR" id="A7FIK8"/>
<dbReference type="GeneID" id="49786045"/>
<dbReference type="KEGG" id="ypi:YpsIP31758_2113"/>
<dbReference type="HOGENOM" id="CLU_041647_0_0_6"/>
<dbReference type="UniPathway" id="UPA00379">
    <property type="reaction ID" value="UER00551"/>
</dbReference>
<dbReference type="Proteomes" id="UP000002412">
    <property type="component" value="Chromosome"/>
</dbReference>
<dbReference type="GO" id="GO:0005737">
    <property type="term" value="C:cytoplasm"/>
    <property type="evidence" value="ECO:0007669"/>
    <property type="project" value="UniProtKB-SubCell"/>
</dbReference>
<dbReference type="GO" id="GO:0050480">
    <property type="term" value="F:imidazolonepropionase activity"/>
    <property type="evidence" value="ECO:0007669"/>
    <property type="project" value="UniProtKB-UniRule"/>
</dbReference>
<dbReference type="GO" id="GO:0005506">
    <property type="term" value="F:iron ion binding"/>
    <property type="evidence" value="ECO:0007669"/>
    <property type="project" value="UniProtKB-UniRule"/>
</dbReference>
<dbReference type="GO" id="GO:0008270">
    <property type="term" value="F:zinc ion binding"/>
    <property type="evidence" value="ECO:0007669"/>
    <property type="project" value="UniProtKB-UniRule"/>
</dbReference>
<dbReference type="GO" id="GO:0019556">
    <property type="term" value="P:L-histidine catabolic process to glutamate and formamide"/>
    <property type="evidence" value="ECO:0007669"/>
    <property type="project" value="UniProtKB-UniPathway"/>
</dbReference>
<dbReference type="GO" id="GO:0019557">
    <property type="term" value="P:L-histidine catabolic process to glutamate and formate"/>
    <property type="evidence" value="ECO:0007669"/>
    <property type="project" value="UniProtKB-UniPathway"/>
</dbReference>
<dbReference type="CDD" id="cd01296">
    <property type="entry name" value="Imidazolone-5PH"/>
    <property type="match status" value="1"/>
</dbReference>
<dbReference type="FunFam" id="3.20.20.140:FF:000007">
    <property type="entry name" value="Imidazolonepropionase"/>
    <property type="match status" value="1"/>
</dbReference>
<dbReference type="Gene3D" id="3.20.20.140">
    <property type="entry name" value="Metal-dependent hydrolases"/>
    <property type="match status" value="1"/>
</dbReference>
<dbReference type="Gene3D" id="2.30.40.10">
    <property type="entry name" value="Urease, subunit C, domain 1"/>
    <property type="match status" value="1"/>
</dbReference>
<dbReference type="HAMAP" id="MF_00372">
    <property type="entry name" value="HutI"/>
    <property type="match status" value="1"/>
</dbReference>
<dbReference type="InterPro" id="IPR006680">
    <property type="entry name" value="Amidohydro-rel"/>
</dbReference>
<dbReference type="InterPro" id="IPR005920">
    <property type="entry name" value="HutI"/>
</dbReference>
<dbReference type="InterPro" id="IPR011059">
    <property type="entry name" value="Metal-dep_hydrolase_composite"/>
</dbReference>
<dbReference type="InterPro" id="IPR032466">
    <property type="entry name" value="Metal_Hydrolase"/>
</dbReference>
<dbReference type="NCBIfam" id="TIGR01224">
    <property type="entry name" value="hutI"/>
    <property type="match status" value="1"/>
</dbReference>
<dbReference type="PANTHER" id="PTHR42752">
    <property type="entry name" value="IMIDAZOLONEPROPIONASE"/>
    <property type="match status" value="1"/>
</dbReference>
<dbReference type="PANTHER" id="PTHR42752:SF1">
    <property type="entry name" value="IMIDAZOLONEPROPIONASE-RELATED"/>
    <property type="match status" value="1"/>
</dbReference>
<dbReference type="Pfam" id="PF01979">
    <property type="entry name" value="Amidohydro_1"/>
    <property type="match status" value="1"/>
</dbReference>
<dbReference type="SUPFAM" id="SSF51338">
    <property type="entry name" value="Composite domain of metallo-dependent hydrolases"/>
    <property type="match status" value="1"/>
</dbReference>
<dbReference type="SUPFAM" id="SSF51556">
    <property type="entry name" value="Metallo-dependent hydrolases"/>
    <property type="match status" value="1"/>
</dbReference>
<reference key="1">
    <citation type="journal article" date="2007" name="PLoS Genet.">
        <title>The complete genome sequence of Yersinia pseudotuberculosis IP31758, the causative agent of Far East scarlet-like fever.</title>
        <authorList>
            <person name="Eppinger M."/>
            <person name="Rosovitz M.J."/>
            <person name="Fricke W.F."/>
            <person name="Rasko D.A."/>
            <person name="Kokorina G."/>
            <person name="Fayolle C."/>
            <person name="Lindler L.E."/>
            <person name="Carniel E."/>
            <person name="Ravel J."/>
        </authorList>
    </citation>
    <scope>NUCLEOTIDE SEQUENCE [LARGE SCALE GENOMIC DNA]</scope>
    <source>
        <strain>IP 31758</strain>
    </source>
</reference>
<evidence type="ECO:0000255" key="1">
    <source>
        <dbReference type="HAMAP-Rule" id="MF_00372"/>
    </source>
</evidence>
<gene>
    <name evidence="1" type="primary">hutI</name>
    <name type="ordered locus">YpsIP31758_2113</name>
</gene>
<comment type="function">
    <text evidence="1">Catalyzes the hydrolytic cleavage of the carbon-nitrogen bond in imidazolone-5-propanoate to yield N-formimidoyl-L-glutamate. It is the third step in the universal histidine degradation pathway.</text>
</comment>
<comment type="catalytic activity">
    <reaction evidence="1">
        <text>4-imidazolone-5-propanoate + H2O = N-formimidoyl-L-glutamate</text>
        <dbReference type="Rhea" id="RHEA:23660"/>
        <dbReference type="ChEBI" id="CHEBI:15377"/>
        <dbReference type="ChEBI" id="CHEBI:58928"/>
        <dbReference type="ChEBI" id="CHEBI:77893"/>
        <dbReference type="EC" id="3.5.2.7"/>
    </reaction>
</comment>
<comment type="cofactor">
    <cofactor evidence="1">
        <name>Zn(2+)</name>
        <dbReference type="ChEBI" id="CHEBI:29105"/>
    </cofactor>
    <cofactor evidence="1">
        <name>Fe(3+)</name>
        <dbReference type="ChEBI" id="CHEBI:29034"/>
    </cofactor>
    <text evidence="1">Binds 1 zinc or iron ion per subunit.</text>
</comment>
<comment type="pathway">
    <text evidence="1">Amino-acid degradation; L-histidine degradation into L-glutamate; N-formimidoyl-L-glutamate from L-histidine: step 3/3.</text>
</comment>
<comment type="subcellular location">
    <subcellularLocation>
        <location evidence="1">Cytoplasm</location>
    </subcellularLocation>
</comment>
<comment type="similarity">
    <text evidence="1">Belongs to the metallo-dependent hydrolases superfamily. HutI family.</text>
</comment>
<feature type="chain" id="PRO_1000059944" description="Imidazolonepropionase">
    <location>
        <begin position="1"/>
        <end position="406"/>
    </location>
</feature>
<feature type="binding site" evidence="1">
    <location>
        <position position="72"/>
    </location>
    <ligand>
        <name>Fe(3+)</name>
        <dbReference type="ChEBI" id="CHEBI:29034"/>
    </ligand>
</feature>
<feature type="binding site" evidence="1">
    <location>
        <position position="72"/>
    </location>
    <ligand>
        <name>Zn(2+)</name>
        <dbReference type="ChEBI" id="CHEBI:29105"/>
    </ligand>
</feature>
<feature type="binding site" evidence="1">
    <location>
        <position position="74"/>
    </location>
    <ligand>
        <name>Fe(3+)</name>
        <dbReference type="ChEBI" id="CHEBI:29034"/>
    </ligand>
</feature>
<feature type="binding site" evidence="1">
    <location>
        <position position="74"/>
    </location>
    <ligand>
        <name>Zn(2+)</name>
        <dbReference type="ChEBI" id="CHEBI:29105"/>
    </ligand>
</feature>
<feature type="binding site" evidence="1">
    <location>
        <position position="81"/>
    </location>
    <ligand>
        <name>4-imidazolone-5-propanoate</name>
        <dbReference type="ChEBI" id="CHEBI:77893"/>
    </ligand>
</feature>
<feature type="binding site" evidence="1">
    <location>
        <position position="144"/>
    </location>
    <ligand>
        <name>4-imidazolone-5-propanoate</name>
        <dbReference type="ChEBI" id="CHEBI:77893"/>
    </ligand>
</feature>
<feature type="binding site" evidence="1">
    <location>
        <position position="144"/>
    </location>
    <ligand>
        <name>N-formimidoyl-L-glutamate</name>
        <dbReference type="ChEBI" id="CHEBI:58928"/>
    </ligand>
</feature>
<feature type="binding site" evidence="1">
    <location>
        <position position="177"/>
    </location>
    <ligand>
        <name>4-imidazolone-5-propanoate</name>
        <dbReference type="ChEBI" id="CHEBI:77893"/>
    </ligand>
</feature>
<feature type="binding site" evidence="1">
    <location>
        <position position="242"/>
    </location>
    <ligand>
        <name>Fe(3+)</name>
        <dbReference type="ChEBI" id="CHEBI:29034"/>
    </ligand>
</feature>
<feature type="binding site" evidence="1">
    <location>
        <position position="242"/>
    </location>
    <ligand>
        <name>Zn(2+)</name>
        <dbReference type="ChEBI" id="CHEBI:29105"/>
    </ligand>
</feature>
<feature type="binding site" evidence="1">
    <location>
        <position position="245"/>
    </location>
    <ligand>
        <name>4-imidazolone-5-propanoate</name>
        <dbReference type="ChEBI" id="CHEBI:77893"/>
    </ligand>
</feature>
<feature type="binding site" evidence="1">
    <location>
        <position position="317"/>
    </location>
    <ligand>
        <name>Fe(3+)</name>
        <dbReference type="ChEBI" id="CHEBI:29034"/>
    </ligand>
</feature>
<feature type="binding site" evidence="1">
    <location>
        <position position="317"/>
    </location>
    <ligand>
        <name>Zn(2+)</name>
        <dbReference type="ChEBI" id="CHEBI:29105"/>
    </ligand>
</feature>
<feature type="binding site" evidence="1">
    <location>
        <position position="319"/>
    </location>
    <ligand>
        <name>N-formimidoyl-L-glutamate</name>
        <dbReference type="ChEBI" id="CHEBI:58928"/>
    </ligand>
</feature>
<feature type="binding site" evidence="1">
    <location>
        <position position="321"/>
    </location>
    <ligand>
        <name>N-formimidoyl-L-glutamate</name>
        <dbReference type="ChEBI" id="CHEBI:58928"/>
    </ligand>
</feature>
<feature type="binding site" evidence="1">
    <location>
        <position position="322"/>
    </location>
    <ligand>
        <name>4-imidazolone-5-propanoate</name>
        <dbReference type="ChEBI" id="CHEBI:77893"/>
    </ligand>
</feature>
<proteinExistence type="inferred from homology"/>
<sequence>MVSVTHCDSLWFGADIITMRGGNYQLIPQGAIAVTGDKIVWIGPHAELPPIHAARQVVYEGGLITPGLIDCHTHLVFGGDRSNEFEQRLNGVSYAEIAANGGGIISTVRATRQASEQQLLEQALFRLKPLLAEGVTTIEIKSGYGLNLESEIKMLRVARRLGELLPIDVKTTCLAAHALPPEFIGQPDDYIDVVCNSIIPQVAVENLADAVDAFCEHLAFSPAQVERVFLAAQKAGLPVKLHAEQLSALRGATLAAKFHAISADHLEYATESDVQAMAKAGTVAVLLPGAYYLLRETQCPPIDLFRQYKVPMALASDANPGTSPVLSLRLMLNMACTLFRMTPEEALAGVTCHAAQALGVQQTQGTLETGKLANWVHWPLSHPAELAYWLGGQLPATVVFRGEVRP</sequence>
<organism>
    <name type="scientific">Yersinia pseudotuberculosis serotype O:1b (strain IP 31758)</name>
    <dbReference type="NCBI Taxonomy" id="349747"/>
    <lineage>
        <taxon>Bacteria</taxon>
        <taxon>Pseudomonadati</taxon>
        <taxon>Pseudomonadota</taxon>
        <taxon>Gammaproteobacteria</taxon>
        <taxon>Enterobacterales</taxon>
        <taxon>Yersiniaceae</taxon>
        <taxon>Yersinia</taxon>
    </lineage>
</organism>
<name>HUTI_YERP3</name>
<accession>A7FIK8</accession>
<keyword id="KW-0963">Cytoplasm</keyword>
<keyword id="KW-0369">Histidine metabolism</keyword>
<keyword id="KW-0378">Hydrolase</keyword>
<keyword id="KW-0408">Iron</keyword>
<keyword id="KW-0479">Metal-binding</keyword>
<keyword id="KW-0862">Zinc</keyword>
<protein>
    <recommendedName>
        <fullName evidence="1">Imidazolonepropionase</fullName>
        <ecNumber evidence="1">3.5.2.7</ecNumber>
    </recommendedName>
    <alternativeName>
        <fullName evidence="1">Imidazolone-5-propionate hydrolase</fullName>
    </alternativeName>
</protein>